<keyword id="KW-0004">4Fe-4S</keyword>
<keyword id="KW-0342">GTP-binding</keyword>
<keyword id="KW-0408">Iron</keyword>
<keyword id="KW-0411">Iron-sulfur</keyword>
<keyword id="KW-0456">Lyase</keyword>
<keyword id="KW-0479">Metal-binding</keyword>
<keyword id="KW-0501">Molybdenum cofactor biosynthesis</keyword>
<keyword id="KW-0547">Nucleotide-binding</keyword>
<keyword id="KW-1185">Reference proteome</keyword>
<keyword id="KW-0949">S-adenosyl-L-methionine</keyword>
<feature type="chain" id="PRO_1000054238" description="GTP 3',8-cyclase">
    <location>
        <begin position="1"/>
        <end position="321"/>
    </location>
</feature>
<feature type="domain" description="Radical SAM core" evidence="2">
    <location>
        <begin position="5"/>
        <end position="227"/>
    </location>
</feature>
<feature type="binding site" evidence="1">
    <location>
        <position position="14"/>
    </location>
    <ligand>
        <name>GTP</name>
        <dbReference type="ChEBI" id="CHEBI:37565"/>
    </ligand>
</feature>
<feature type="binding site" evidence="1">
    <location>
        <position position="21"/>
    </location>
    <ligand>
        <name>[4Fe-4S] cluster</name>
        <dbReference type="ChEBI" id="CHEBI:49883"/>
        <label>1</label>
        <note>4Fe-4S-S-AdoMet</note>
    </ligand>
</feature>
<feature type="binding site" evidence="1">
    <location>
        <position position="25"/>
    </location>
    <ligand>
        <name>[4Fe-4S] cluster</name>
        <dbReference type="ChEBI" id="CHEBI:49883"/>
        <label>1</label>
        <note>4Fe-4S-S-AdoMet</note>
    </ligand>
</feature>
<feature type="binding site" evidence="1">
    <location>
        <position position="27"/>
    </location>
    <ligand>
        <name>S-adenosyl-L-methionine</name>
        <dbReference type="ChEBI" id="CHEBI:59789"/>
    </ligand>
</feature>
<feature type="binding site" evidence="1">
    <location>
        <position position="28"/>
    </location>
    <ligand>
        <name>[4Fe-4S] cluster</name>
        <dbReference type="ChEBI" id="CHEBI:49883"/>
        <label>1</label>
        <note>4Fe-4S-S-AdoMet</note>
    </ligand>
</feature>
<feature type="binding site" evidence="1">
    <location>
        <position position="64"/>
    </location>
    <ligand>
        <name>GTP</name>
        <dbReference type="ChEBI" id="CHEBI:37565"/>
    </ligand>
</feature>
<feature type="binding site" evidence="1">
    <location>
        <position position="68"/>
    </location>
    <ligand>
        <name>S-adenosyl-L-methionine</name>
        <dbReference type="ChEBI" id="CHEBI:59789"/>
    </ligand>
</feature>
<feature type="binding site" evidence="1">
    <location>
        <position position="95"/>
    </location>
    <ligand>
        <name>GTP</name>
        <dbReference type="ChEBI" id="CHEBI:37565"/>
    </ligand>
</feature>
<feature type="binding site" evidence="1">
    <location>
        <position position="119"/>
    </location>
    <ligand>
        <name>S-adenosyl-L-methionine</name>
        <dbReference type="ChEBI" id="CHEBI:59789"/>
    </ligand>
</feature>
<feature type="binding site" evidence="1">
    <location>
        <position position="155"/>
    </location>
    <ligand>
        <name>GTP</name>
        <dbReference type="ChEBI" id="CHEBI:37565"/>
    </ligand>
</feature>
<feature type="binding site" evidence="1">
    <location>
        <position position="189"/>
    </location>
    <ligand>
        <name>S-adenosyl-L-methionine</name>
        <dbReference type="ChEBI" id="CHEBI:59789"/>
    </ligand>
</feature>
<feature type="binding site" evidence="1">
    <location>
        <position position="249"/>
    </location>
    <ligand>
        <name>[4Fe-4S] cluster</name>
        <dbReference type="ChEBI" id="CHEBI:49883"/>
        <label>2</label>
        <note>4Fe-4S-substrate</note>
    </ligand>
</feature>
<feature type="binding site" evidence="1">
    <location>
        <position position="252"/>
    </location>
    <ligand>
        <name>[4Fe-4S] cluster</name>
        <dbReference type="ChEBI" id="CHEBI:49883"/>
        <label>2</label>
        <note>4Fe-4S-substrate</note>
    </ligand>
</feature>
<feature type="binding site" evidence="1">
    <location>
        <begin position="254"/>
        <end position="256"/>
    </location>
    <ligand>
        <name>GTP</name>
        <dbReference type="ChEBI" id="CHEBI:37565"/>
    </ligand>
</feature>
<feature type="binding site" evidence="1">
    <location>
        <position position="266"/>
    </location>
    <ligand>
        <name>[4Fe-4S] cluster</name>
        <dbReference type="ChEBI" id="CHEBI:49883"/>
        <label>2</label>
        <note>4Fe-4S-substrate</note>
    </ligand>
</feature>
<comment type="function">
    <text evidence="1">Catalyzes the cyclization of GTP to (8S)-3',8-cyclo-7,8-dihydroguanosine 5'-triphosphate.</text>
</comment>
<comment type="catalytic activity">
    <reaction evidence="1">
        <text>GTP + AH2 + S-adenosyl-L-methionine = (8S)-3',8-cyclo-7,8-dihydroguanosine 5'-triphosphate + 5'-deoxyadenosine + L-methionine + A + H(+)</text>
        <dbReference type="Rhea" id="RHEA:49576"/>
        <dbReference type="ChEBI" id="CHEBI:13193"/>
        <dbReference type="ChEBI" id="CHEBI:15378"/>
        <dbReference type="ChEBI" id="CHEBI:17319"/>
        <dbReference type="ChEBI" id="CHEBI:17499"/>
        <dbReference type="ChEBI" id="CHEBI:37565"/>
        <dbReference type="ChEBI" id="CHEBI:57844"/>
        <dbReference type="ChEBI" id="CHEBI:59789"/>
        <dbReference type="ChEBI" id="CHEBI:131766"/>
        <dbReference type="EC" id="4.1.99.22"/>
    </reaction>
</comment>
<comment type="cofactor">
    <cofactor evidence="1">
        <name>[4Fe-4S] cluster</name>
        <dbReference type="ChEBI" id="CHEBI:49883"/>
    </cofactor>
    <text evidence="1">Binds 2 [4Fe-4S] clusters. Binds 1 [4Fe-4S] cluster coordinated with 3 cysteines and an exchangeable S-adenosyl-L-methionine and 1 [4Fe-4S] cluster coordinated with 3 cysteines and the GTP-derived substrate.</text>
</comment>
<comment type="pathway">
    <text evidence="1">Cofactor biosynthesis; molybdopterin biosynthesis.</text>
</comment>
<comment type="subunit">
    <text evidence="1">Monomer and homodimer.</text>
</comment>
<comment type="similarity">
    <text evidence="1">Belongs to the radical SAM superfamily. MoaA family.</text>
</comment>
<name>MOAA_SULDN</name>
<organism>
    <name type="scientific">Sulfurimonas denitrificans (strain ATCC 33889 / DSM 1251)</name>
    <name type="common">Thiomicrospira denitrificans (strain ATCC 33889 / DSM 1251)</name>
    <dbReference type="NCBI Taxonomy" id="326298"/>
    <lineage>
        <taxon>Bacteria</taxon>
        <taxon>Pseudomonadati</taxon>
        <taxon>Campylobacterota</taxon>
        <taxon>Epsilonproteobacteria</taxon>
        <taxon>Campylobacterales</taxon>
        <taxon>Sulfurimonadaceae</taxon>
        <taxon>Sulfurimonas</taxon>
    </lineage>
</organism>
<reference key="1">
    <citation type="journal article" date="2008" name="Appl. Environ. Microbiol.">
        <title>Genome of the epsilonproteobacterial chemolithoautotroph Sulfurimonas denitrificans.</title>
        <authorList>
            <person name="Sievert S.M."/>
            <person name="Scott K.M."/>
            <person name="Klotz M.G."/>
            <person name="Chain P.S.G."/>
            <person name="Hauser L.J."/>
            <person name="Hemp J."/>
            <person name="Huegler M."/>
            <person name="Land M."/>
            <person name="Lapidus A."/>
            <person name="Larimer F.W."/>
            <person name="Lucas S."/>
            <person name="Malfatti S.A."/>
            <person name="Meyer F."/>
            <person name="Paulsen I.T."/>
            <person name="Ren Q."/>
            <person name="Simon J."/>
            <person name="Bailey K."/>
            <person name="Diaz E."/>
            <person name="Fitzpatrick K.A."/>
            <person name="Glover B."/>
            <person name="Gwatney N."/>
            <person name="Korajkic A."/>
            <person name="Long A."/>
            <person name="Mobberley J.M."/>
            <person name="Pantry S.N."/>
            <person name="Pazder G."/>
            <person name="Peterson S."/>
            <person name="Quintanilla J.D."/>
            <person name="Sprinkle R."/>
            <person name="Stephens J."/>
            <person name="Thomas P."/>
            <person name="Vaughn R."/>
            <person name="Weber M.J."/>
            <person name="Wooten L.L."/>
        </authorList>
    </citation>
    <scope>NUCLEOTIDE SEQUENCE [LARGE SCALE GENOMIC DNA]</scope>
    <source>
        <strain>ATCC 33889 / DSM 1251</strain>
    </source>
</reference>
<accession>Q30P92</accession>
<proteinExistence type="inferred from homology"/>
<dbReference type="EC" id="4.1.99.22" evidence="1"/>
<dbReference type="EMBL" id="CP000153">
    <property type="protein sequence ID" value="ABB45189.1"/>
    <property type="molecule type" value="Genomic_DNA"/>
</dbReference>
<dbReference type="RefSeq" id="WP_011373529.1">
    <property type="nucleotide sequence ID" value="NC_007575.1"/>
</dbReference>
<dbReference type="SMR" id="Q30P92"/>
<dbReference type="STRING" id="326298.Suden_1915"/>
<dbReference type="KEGG" id="tdn:Suden_1915"/>
<dbReference type="eggNOG" id="COG2896">
    <property type="taxonomic scope" value="Bacteria"/>
</dbReference>
<dbReference type="HOGENOM" id="CLU_009273_0_1_7"/>
<dbReference type="OrthoDB" id="9763993at2"/>
<dbReference type="UniPathway" id="UPA00344"/>
<dbReference type="Proteomes" id="UP000002714">
    <property type="component" value="Chromosome"/>
</dbReference>
<dbReference type="GO" id="GO:0051539">
    <property type="term" value="F:4 iron, 4 sulfur cluster binding"/>
    <property type="evidence" value="ECO:0007669"/>
    <property type="project" value="UniProtKB-UniRule"/>
</dbReference>
<dbReference type="GO" id="GO:0061799">
    <property type="term" value="F:cyclic pyranopterin monophosphate synthase activity"/>
    <property type="evidence" value="ECO:0007669"/>
    <property type="project" value="TreeGrafter"/>
</dbReference>
<dbReference type="GO" id="GO:0061798">
    <property type="term" value="F:GTP 3',8'-cyclase activity"/>
    <property type="evidence" value="ECO:0007669"/>
    <property type="project" value="UniProtKB-UniRule"/>
</dbReference>
<dbReference type="GO" id="GO:0005525">
    <property type="term" value="F:GTP binding"/>
    <property type="evidence" value="ECO:0007669"/>
    <property type="project" value="UniProtKB-UniRule"/>
</dbReference>
<dbReference type="GO" id="GO:0046872">
    <property type="term" value="F:metal ion binding"/>
    <property type="evidence" value="ECO:0007669"/>
    <property type="project" value="UniProtKB-KW"/>
</dbReference>
<dbReference type="GO" id="GO:1904047">
    <property type="term" value="F:S-adenosyl-L-methionine binding"/>
    <property type="evidence" value="ECO:0007669"/>
    <property type="project" value="UniProtKB-UniRule"/>
</dbReference>
<dbReference type="GO" id="GO:0006777">
    <property type="term" value="P:Mo-molybdopterin cofactor biosynthetic process"/>
    <property type="evidence" value="ECO:0007669"/>
    <property type="project" value="UniProtKB-UniRule"/>
</dbReference>
<dbReference type="CDD" id="cd01335">
    <property type="entry name" value="Radical_SAM"/>
    <property type="match status" value="1"/>
</dbReference>
<dbReference type="CDD" id="cd21117">
    <property type="entry name" value="Twitch_MoaA"/>
    <property type="match status" value="1"/>
</dbReference>
<dbReference type="Gene3D" id="3.20.20.70">
    <property type="entry name" value="Aldolase class I"/>
    <property type="match status" value="1"/>
</dbReference>
<dbReference type="HAMAP" id="MF_01225_B">
    <property type="entry name" value="MoaA_B"/>
    <property type="match status" value="1"/>
</dbReference>
<dbReference type="InterPro" id="IPR013785">
    <property type="entry name" value="Aldolase_TIM"/>
</dbReference>
<dbReference type="InterPro" id="IPR006638">
    <property type="entry name" value="Elp3/MiaA/NifB-like_rSAM"/>
</dbReference>
<dbReference type="InterPro" id="IPR013483">
    <property type="entry name" value="MoaA"/>
</dbReference>
<dbReference type="InterPro" id="IPR000385">
    <property type="entry name" value="MoaA_NifB_PqqE_Fe-S-bd_CS"/>
</dbReference>
<dbReference type="InterPro" id="IPR010505">
    <property type="entry name" value="MoaA_twitch"/>
</dbReference>
<dbReference type="InterPro" id="IPR050105">
    <property type="entry name" value="MoCo_biosynth_MoaA/MoaC"/>
</dbReference>
<dbReference type="InterPro" id="IPR007197">
    <property type="entry name" value="rSAM"/>
</dbReference>
<dbReference type="NCBIfam" id="TIGR02666">
    <property type="entry name" value="moaA"/>
    <property type="match status" value="1"/>
</dbReference>
<dbReference type="PANTHER" id="PTHR22960:SF0">
    <property type="entry name" value="MOLYBDENUM COFACTOR BIOSYNTHESIS PROTEIN 1"/>
    <property type="match status" value="1"/>
</dbReference>
<dbReference type="PANTHER" id="PTHR22960">
    <property type="entry name" value="MOLYBDOPTERIN COFACTOR SYNTHESIS PROTEIN A"/>
    <property type="match status" value="1"/>
</dbReference>
<dbReference type="Pfam" id="PF13353">
    <property type="entry name" value="Fer4_12"/>
    <property type="match status" value="1"/>
</dbReference>
<dbReference type="Pfam" id="PF06463">
    <property type="entry name" value="Mob_synth_C"/>
    <property type="match status" value="1"/>
</dbReference>
<dbReference type="Pfam" id="PF04055">
    <property type="entry name" value="Radical_SAM"/>
    <property type="match status" value="1"/>
</dbReference>
<dbReference type="SFLD" id="SFLDG01383">
    <property type="entry name" value="cyclic_pyranopterin_phosphate"/>
    <property type="match status" value="1"/>
</dbReference>
<dbReference type="SFLD" id="SFLDG01067">
    <property type="entry name" value="SPASM/twitch_domain_containing"/>
    <property type="match status" value="1"/>
</dbReference>
<dbReference type="SMART" id="SM00729">
    <property type="entry name" value="Elp3"/>
    <property type="match status" value="1"/>
</dbReference>
<dbReference type="SUPFAM" id="SSF102114">
    <property type="entry name" value="Radical SAM enzymes"/>
    <property type="match status" value="1"/>
</dbReference>
<dbReference type="PROSITE" id="PS01305">
    <property type="entry name" value="MOAA_NIFB_PQQE"/>
    <property type="match status" value="1"/>
</dbReference>
<dbReference type="PROSITE" id="PS51918">
    <property type="entry name" value="RADICAL_SAM"/>
    <property type="match status" value="1"/>
</dbReference>
<evidence type="ECO:0000255" key="1">
    <source>
        <dbReference type="HAMAP-Rule" id="MF_01225"/>
    </source>
</evidence>
<evidence type="ECO:0000255" key="2">
    <source>
        <dbReference type="PROSITE-ProRule" id="PRU01266"/>
    </source>
</evidence>
<protein>
    <recommendedName>
        <fullName evidence="1">GTP 3',8-cyclase</fullName>
        <ecNumber evidence="1">4.1.99.22</ecNumber>
    </recommendedName>
    <alternativeName>
        <fullName evidence="1">Molybdenum cofactor biosynthesis protein A</fullName>
    </alternativeName>
</protein>
<sequence length="321" mass="36619">MLIDSYDRVVDYLRISVTERCNFRCQYCMPEKPFSWVPKENLLTFEELFLFVKVAIDEGIRKIRITGGEPLLREDLDKFIKMIFDYAPDIDLAMTTNAYLLKSTAQKLRDAGLKRLNVSIDTLKPEVAFAIAGKDVLKNVLDGVNEALAVGLKVKVNMVPMKNMNAQEIVDVLEYSKKRGMTIRFIEYMENKFASKEISGLKSDELLSMLREHYEFVDEGYDGASPSRYYKMSDGYRFGIIEPYGDDFCKQCNRIRLTAEGQLIPCLYFDEALSIAKSIKEGDIVAASEVLRDVVKNKPEKNRWGGEDGEVSTRAFYETGG</sequence>
<gene>
    <name evidence="1" type="primary">moaA</name>
    <name type="ordered locus">Suden_1915</name>
</gene>